<name>F17GG_ECOLX</name>
<organism>
    <name type="scientific">Escherichia coli</name>
    <dbReference type="NCBI Taxonomy" id="562"/>
    <lineage>
        <taxon>Bacteria</taxon>
        <taxon>Pseudomonadati</taxon>
        <taxon>Pseudomonadota</taxon>
        <taxon>Gammaproteobacteria</taxon>
        <taxon>Enterobacterales</taxon>
        <taxon>Enterobacteriaceae</taxon>
        <taxon>Escherichia</taxon>
    </lineage>
</organism>
<comment type="function">
    <text evidence="4 5">Essential fimbrial adhesion factor that mediates binding to N-acetylglucosamine-containing receptors in the host intestinal microvilli, leading to colonization of the intestinal tissue, and diarrhea or septicemia. Also confers adhesiveness to laminin and basement membranes. May be involved in the initiation of polymerization of fimbrillin monomers during fimbrial filament biogenesis.</text>
</comment>
<comment type="subcellular location">
    <subcellularLocation>
        <location evidence="1">Fimbrium</location>
    </subcellularLocation>
    <text evidence="1">Attached to the tip of the fimbrial filaments.</text>
</comment>
<comment type="similarity">
    <text evidence="6">Belongs to the fimbrial protein family.</text>
</comment>
<keyword id="KW-0002">3D-structure</keyword>
<keyword id="KW-1015">Disulfide bond</keyword>
<keyword id="KW-0281">Fimbrium</keyword>
<keyword id="KW-0430">Lectin</keyword>
<keyword id="KW-0732">Signal</keyword>
<keyword id="KW-0843">Virulence</keyword>
<sequence>MTNFYKVCLAVFILVCCNISHAAVSFIGSTENDVGPSQGSYSSTHAMDNLPFVYNTGYNIGYQNANVWRISGGFCVGLDGKVDLPVVGSLDGQSIYGLTEEVGLLIWMGDTNYSRGTAMSGNSWENVFSGWCVGNYVSTQGLSVHVRPVILKRNSSAQYSVQKTSIGSIRMRPYNGSSAGSVQTTVNFSLNPFTLNDTVTSCRLLTPSAVNVSLAAISAGQLPSSGDEVVAGTTSLKLQCDAGVTVWATLTDATTPSNRSDILTLTGASTATGVGLRIYKNTDSTPLKFGPDSPVKGNENQWQLSTGTETSPSVRLYVKYVNTGEGINPGTVNGISTFTFSYQ</sequence>
<gene>
    <name type="primary">f17gG</name>
    <name type="synonym">gafD</name>
</gene>
<protein>
    <recommendedName>
        <fullName>F17g-G fimbrial adhesin</fullName>
    </recommendedName>
    <alternativeName>
        <fullName>G fimbriae adhesin</fullName>
    </alternativeName>
    <alternativeName>
        <fullName>G lectin</fullName>
    </alternativeName>
</protein>
<evidence type="ECO:0000250" key="1"/>
<evidence type="ECO:0000256" key="2">
    <source>
        <dbReference type="SAM" id="MobiDB-lite"/>
    </source>
</evidence>
<evidence type="ECO:0000269" key="3">
    <source>
    </source>
</evidence>
<evidence type="ECO:0000269" key="4">
    <source>
    </source>
</evidence>
<evidence type="ECO:0000269" key="5">
    <source>
    </source>
</evidence>
<evidence type="ECO:0000305" key="6"/>
<evidence type="ECO:0007829" key="7">
    <source>
        <dbReference type="PDB" id="1OIO"/>
    </source>
</evidence>
<feature type="signal peptide" evidence="1">
    <location>
        <begin position="1"/>
        <end position="22"/>
    </location>
</feature>
<feature type="chain" id="PRO_0000356271" description="F17g-G fimbrial adhesin">
    <location>
        <begin position="23"/>
        <end position="343"/>
    </location>
</feature>
<feature type="region of interest" description="Receptor-binding lectin domain">
    <location>
        <begin position="23"/>
        <end position="199"/>
    </location>
</feature>
<feature type="region of interest" description="Fimbrillin-binding domain">
    <location>
        <begin position="200"/>
        <end position="343"/>
    </location>
</feature>
<feature type="region of interest" description="Disordered" evidence="2">
    <location>
        <begin position="287"/>
        <end position="307"/>
    </location>
</feature>
<feature type="compositionally biased region" description="Polar residues" evidence="2">
    <location>
        <begin position="298"/>
        <end position="307"/>
    </location>
</feature>
<feature type="binding site">
    <location>
        <begin position="65"/>
        <end position="66"/>
    </location>
    <ligand>
        <name>a carbohydrate</name>
        <dbReference type="ChEBI" id="CHEBI:16646"/>
    </ligand>
</feature>
<feature type="binding site">
    <location>
        <begin position="110"/>
        <end position="111"/>
    </location>
    <ligand>
        <name>a carbohydrate</name>
        <dbReference type="ChEBI" id="CHEBI:16646"/>
    </ligand>
</feature>
<feature type="binding site">
    <location>
        <begin position="138"/>
        <end position="141"/>
    </location>
    <ligand>
        <name>a carbohydrate</name>
        <dbReference type="ChEBI" id="CHEBI:16646"/>
    </ligand>
</feature>
<feature type="disulfide bond" evidence="3">
    <location>
        <begin position="75"/>
        <end position="132"/>
    </location>
</feature>
<feature type="mutagenesis site" description="80% reduction in binding to N-acetyl-D-glucosamine." evidence="3">
    <original>D</original>
    <variation>L</variation>
    <location>
        <position position="110"/>
    </location>
</feature>
<feature type="strand" evidence="7">
    <location>
        <begin position="24"/>
        <end position="26"/>
    </location>
</feature>
<feature type="strand" evidence="7">
    <location>
        <begin position="30"/>
        <end position="35"/>
    </location>
</feature>
<feature type="strand" evidence="7">
    <location>
        <begin position="39"/>
        <end position="46"/>
    </location>
</feature>
<feature type="strand" evidence="7">
    <location>
        <begin position="51"/>
        <end position="53"/>
    </location>
</feature>
<feature type="strand" evidence="7">
    <location>
        <begin position="60"/>
        <end position="71"/>
    </location>
</feature>
<feature type="strand" evidence="7">
    <location>
        <begin position="75"/>
        <end position="82"/>
    </location>
</feature>
<feature type="strand" evidence="7">
    <location>
        <begin position="86"/>
        <end position="90"/>
    </location>
</feature>
<feature type="strand" evidence="7">
    <location>
        <begin position="93"/>
        <end position="112"/>
    </location>
</feature>
<feature type="helix" evidence="7">
    <location>
        <begin position="113"/>
        <end position="115"/>
    </location>
</feature>
<feature type="strand" evidence="7">
    <location>
        <begin position="116"/>
        <end position="118"/>
    </location>
</feature>
<feature type="strand" evidence="7">
    <location>
        <begin position="121"/>
        <end position="123"/>
    </location>
</feature>
<feature type="strand" evidence="7">
    <location>
        <begin position="125"/>
        <end position="132"/>
    </location>
</feature>
<feature type="strand" evidence="7">
    <location>
        <begin position="135"/>
        <end position="150"/>
    </location>
</feature>
<feature type="strand" evidence="7">
    <location>
        <begin position="155"/>
        <end position="161"/>
    </location>
</feature>
<feature type="strand" evidence="7">
    <location>
        <begin position="164"/>
        <end position="173"/>
    </location>
</feature>
<feature type="strand" evidence="7">
    <location>
        <begin position="185"/>
        <end position="190"/>
    </location>
</feature>
<feature type="strand" evidence="7">
    <location>
        <begin position="193"/>
        <end position="200"/>
    </location>
</feature>
<dbReference type="EMBL" id="L33969">
    <property type="protein sequence ID" value="AAA69514.1"/>
    <property type="molecule type" value="Genomic_DNA"/>
</dbReference>
<dbReference type="PIR" id="I55123">
    <property type="entry name" value="I55123"/>
</dbReference>
<dbReference type="PDB" id="1OIO">
    <property type="method" value="X-ray"/>
    <property type="resolution" value="1.70 A"/>
    <property type="chains" value="A/B=23-200"/>
</dbReference>
<dbReference type="PDBsum" id="1OIO"/>
<dbReference type="SMR" id="Q47341"/>
<dbReference type="UniLectin" id="Q47341"/>
<dbReference type="EvolutionaryTrace" id="Q47341"/>
<dbReference type="GO" id="GO:0009289">
    <property type="term" value="C:pilus"/>
    <property type="evidence" value="ECO:0007669"/>
    <property type="project" value="UniProtKB-SubCell"/>
</dbReference>
<dbReference type="GO" id="GO:0030246">
    <property type="term" value="F:carbohydrate binding"/>
    <property type="evidence" value="ECO:0007669"/>
    <property type="project" value="UniProtKB-KW"/>
</dbReference>
<dbReference type="GO" id="GO:0044406">
    <property type="term" value="P:adhesion of symbiont to host"/>
    <property type="evidence" value="ECO:0007669"/>
    <property type="project" value="InterPro"/>
</dbReference>
<dbReference type="GO" id="GO:0043709">
    <property type="term" value="P:cell adhesion involved in single-species biofilm formation"/>
    <property type="evidence" value="ECO:0007669"/>
    <property type="project" value="TreeGrafter"/>
</dbReference>
<dbReference type="Gene3D" id="2.60.40.1410">
    <property type="entry name" value="Bacterial adhesins - F17c-type"/>
    <property type="match status" value="1"/>
</dbReference>
<dbReference type="Gene3D" id="2.60.40.1090">
    <property type="entry name" value="Fimbrial-type adhesion domain"/>
    <property type="match status" value="1"/>
</dbReference>
<dbReference type="InterPro" id="IPR000259">
    <property type="entry name" value="Adhesion_dom_fimbrial"/>
</dbReference>
<dbReference type="InterPro" id="IPR036937">
    <property type="entry name" value="Adhesion_dom_fimbrial_sf"/>
</dbReference>
<dbReference type="InterPro" id="IPR008966">
    <property type="entry name" value="Adhesion_dom_sf"/>
</dbReference>
<dbReference type="InterPro" id="IPR050263">
    <property type="entry name" value="Bact_Fimbrial_Adh_Pro"/>
</dbReference>
<dbReference type="InterPro" id="IPR015303">
    <property type="entry name" value="Fimbrial_adhesin_lectin_dom"/>
</dbReference>
<dbReference type="PANTHER" id="PTHR33420">
    <property type="entry name" value="FIMBRIAL SUBUNIT ELFA-RELATED"/>
    <property type="match status" value="1"/>
</dbReference>
<dbReference type="PANTHER" id="PTHR33420:SF14">
    <property type="entry name" value="TYPE 1 FIMBRIN D-MANNOSE SPECIFIC ADHESIN"/>
    <property type="match status" value="1"/>
</dbReference>
<dbReference type="Pfam" id="PF09222">
    <property type="entry name" value="Fim-adh_lectin"/>
    <property type="match status" value="1"/>
</dbReference>
<dbReference type="Pfam" id="PF00419">
    <property type="entry name" value="Fimbrial"/>
    <property type="match status" value="1"/>
</dbReference>
<dbReference type="SUPFAM" id="SSF49401">
    <property type="entry name" value="Bacterial adhesins"/>
    <property type="match status" value="2"/>
</dbReference>
<proteinExistence type="evidence at protein level"/>
<reference key="1">
    <citation type="journal article" date="1995" name="J. Bacteriol.">
        <title>The Escherichia coli G-fimbrial lectin protein participates both in fimbrial biogenesis and in recognition of the receptor N-acetyl-D-glucosamine.</title>
        <authorList>
            <person name="Saarela S."/>
            <person name="Taira S."/>
            <person name="Nurmiaho-Lassila E.L."/>
            <person name="Makkonen A."/>
            <person name="Rhen M."/>
        </authorList>
    </citation>
    <scope>NUCLEOTIDE SEQUENCE [GENOMIC DNA]</scope>
    <scope>FUNCTION</scope>
    <source>
        <strain>IH11165 / UPEC</strain>
    </source>
</reference>
<reference key="2">
    <citation type="journal article" date="1996" name="Infect. Immun.">
        <title>The GafD protein of the G (F17) fimbrial complex confers adhesiveness of Escherichia coli to laminin.</title>
        <authorList>
            <person name="Saarela S."/>
            <person name="Westerlund-Wikstroem B."/>
            <person name="Rhen M."/>
            <person name="Korhonen T.K."/>
        </authorList>
    </citation>
    <scope>FUNCTION IN ADHESION TO HOST BASAL MEMBRANE LAMININ</scope>
</reference>
<reference key="3">
    <citation type="journal article" date="2003" name="J. Mol. Biol.">
        <title>The structural basis of receptor-binding by Escherichia coli associated with diarrhea and septicemia.</title>
        <authorList>
            <person name="Merckel M.C."/>
            <person name="Tanskanen J."/>
            <person name="Edelman S."/>
            <person name="Westerlund-Wikstroem B."/>
            <person name="Korhonen T.K."/>
            <person name="Goldman A."/>
        </authorList>
    </citation>
    <scope>X-RAY CRYSTALLOGRAPHY (1.7 ANGSTROMS) OF 23-200 IN COMPLEX WITH N-ACETYL-D-GLUCOSAMINE</scope>
    <scope>DISULFIDE BOND</scope>
    <scope>MUTAGENESIS OF ASP-110</scope>
</reference>
<accession>Q47341</accession>